<evidence type="ECO:0000250" key="1"/>
<evidence type="ECO:0000256" key="2">
    <source>
        <dbReference type="SAM" id="MobiDB-lite"/>
    </source>
</evidence>
<evidence type="ECO:0000305" key="3"/>
<reference key="1">
    <citation type="journal article" date="2007" name="Science">
        <title>The Fusarium graminearum genome reveals a link between localized polymorphism and pathogen specialization.</title>
        <authorList>
            <person name="Cuomo C.A."/>
            <person name="Gueldener U."/>
            <person name="Xu J.-R."/>
            <person name="Trail F."/>
            <person name="Turgeon B.G."/>
            <person name="Di Pietro A."/>
            <person name="Walton J.D."/>
            <person name="Ma L.-J."/>
            <person name="Baker S.E."/>
            <person name="Rep M."/>
            <person name="Adam G."/>
            <person name="Antoniw J."/>
            <person name="Baldwin T."/>
            <person name="Calvo S.E."/>
            <person name="Chang Y.-L."/>
            <person name="DeCaprio D."/>
            <person name="Gale L.R."/>
            <person name="Gnerre S."/>
            <person name="Goswami R.S."/>
            <person name="Hammond-Kosack K."/>
            <person name="Harris L.J."/>
            <person name="Hilburn K."/>
            <person name="Kennell J.C."/>
            <person name="Kroken S."/>
            <person name="Magnuson J.K."/>
            <person name="Mannhaupt G."/>
            <person name="Mauceli E.W."/>
            <person name="Mewes H.-W."/>
            <person name="Mitterbauer R."/>
            <person name="Muehlbauer G."/>
            <person name="Muensterkoetter M."/>
            <person name="Nelson D."/>
            <person name="O'Donnell K."/>
            <person name="Ouellet T."/>
            <person name="Qi W."/>
            <person name="Quesneville H."/>
            <person name="Roncero M.I.G."/>
            <person name="Seong K.-Y."/>
            <person name="Tetko I.V."/>
            <person name="Urban M."/>
            <person name="Waalwijk C."/>
            <person name="Ward T.J."/>
            <person name="Yao J."/>
            <person name="Birren B.W."/>
            <person name="Kistler H.C."/>
        </authorList>
    </citation>
    <scope>NUCLEOTIDE SEQUENCE [LARGE SCALE GENOMIC DNA]</scope>
    <source>
        <strain>ATCC MYA-4620 / CBS 123657 / FGSC 9075 / NRRL 31084 / PH-1</strain>
    </source>
</reference>
<reference key="2">
    <citation type="journal article" date="2010" name="Nature">
        <title>Comparative genomics reveals mobile pathogenicity chromosomes in Fusarium.</title>
        <authorList>
            <person name="Ma L.-J."/>
            <person name="van der Does H.C."/>
            <person name="Borkovich K.A."/>
            <person name="Coleman J.J."/>
            <person name="Daboussi M.-J."/>
            <person name="Di Pietro A."/>
            <person name="Dufresne M."/>
            <person name="Freitag M."/>
            <person name="Grabherr M."/>
            <person name="Henrissat B."/>
            <person name="Houterman P.M."/>
            <person name="Kang S."/>
            <person name="Shim W.-B."/>
            <person name="Woloshuk C."/>
            <person name="Xie X."/>
            <person name="Xu J.-R."/>
            <person name="Antoniw J."/>
            <person name="Baker S.E."/>
            <person name="Bluhm B.H."/>
            <person name="Breakspear A."/>
            <person name="Brown D.W."/>
            <person name="Butchko R.A.E."/>
            <person name="Chapman S."/>
            <person name="Coulson R."/>
            <person name="Coutinho P.M."/>
            <person name="Danchin E.G.J."/>
            <person name="Diener A."/>
            <person name="Gale L.R."/>
            <person name="Gardiner D.M."/>
            <person name="Goff S."/>
            <person name="Hammond-Kosack K.E."/>
            <person name="Hilburn K."/>
            <person name="Hua-Van A."/>
            <person name="Jonkers W."/>
            <person name="Kazan K."/>
            <person name="Kodira C.D."/>
            <person name="Koehrsen M."/>
            <person name="Kumar L."/>
            <person name="Lee Y.-H."/>
            <person name="Li L."/>
            <person name="Manners J.M."/>
            <person name="Miranda-Saavedra D."/>
            <person name="Mukherjee M."/>
            <person name="Park G."/>
            <person name="Park J."/>
            <person name="Park S.-Y."/>
            <person name="Proctor R.H."/>
            <person name="Regev A."/>
            <person name="Ruiz-Roldan M.C."/>
            <person name="Sain D."/>
            <person name="Sakthikumar S."/>
            <person name="Sykes S."/>
            <person name="Schwartz D.C."/>
            <person name="Turgeon B.G."/>
            <person name="Wapinski I."/>
            <person name="Yoder O."/>
            <person name="Young S."/>
            <person name="Zeng Q."/>
            <person name="Zhou S."/>
            <person name="Galagan J."/>
            <person name="Cuomo C.A."/>
            <person name="Kistler H.C."/>
            <person name="Rep M."/>
        </authorList>
    </citation>
    <scope>GENOME REANNOTATION</scope>
    <source>
        <strain>ATCC MYA-4620 / CBS 123657 / FGSC 9075 / NRRL 31084 / PH-1</strain>
    </source>
</reference>
<reference key="3">
    <citation type="journal article" date="2015" name="BMC Genomics">
        <title>The completed genome sequence of the pathogenic ascomycete fungus Fusarium graminearum.</title>
        <authorList>
            <person name="King R."/>
            <person name="Urban M."/>
            <person name="Hammond-Kosack M.C.U."/>
            <person name="Hassani-Pak K."/>
            <person name="Hammond-Kosack K.E."/>
        </authorList>
    </citation>
    <scope>NUCLEOTIDE SEQUENCE [LARGE SCALE GENOMIC DNA]</scope>
    <source>
        <strain>ATCC MYA-4620 / CBS 123657 / FGSC 9075 / NRRL 31084 / PH-1</strain>
    </source>
</reference>
<protein>
    <recommendedName>
        <fullName>Protein PNG1</fullName>
    </recommendedName>
</protein>
<dbReference type="EMBL" id="DS231663">
    <property type="protein sequence ID" value="ESU05430.1"/>
    <property type="molecule type" value="Genomic_DNA"/>
</dbReference>
<dbReference type="EMBL" id="HG970332">
    <property type="protein sequence ID" value="CEF72166.1"/>
    <property type="molecule type" value="Genomic_DNA"/>
</dbReference>
<dbReference type="RefSeq" id="XP_011315915.1">
    <property type="nucleotide sequence ID" value="XM_011317613.1"/>
</dbReference>
<dbReference type="SMR" id="Q4IR87"/>
<dbReference type="FunCoup" id="Q4IR87">
    <property type="interactions" value="81"/>
</dbReference>
<dbReference type="STRING" id="229533.Q4IR87"/>
<dbReference type="GeneID" id="23547764"/>
<dbReference type="KEGG" id="fgr:FGSG_00271"/>
<dbReference type="VEuPathDB" id="FungiDB:FGRAMPH1_01G00729"/>
<dbReference type="eggNOG" id="KOG0909">
    <property type="taxonomic scope" value="Eukaryota"/>
</dbReference>
<dbReference type="HOGENOM" id="CLU_031058_1_0_1"/>
<dbReference type="InParanoid" id="Q4IR87"/>
<dbReference type="OrthoDB" id="51695at110618"/>
<dbReference type="Proteomes" id="UP000070720">
    <property type="component" value="Chromosome 1"/>
</dbReference>
<dbReference type="GO" id="GO:0005829">
    <property type="term" value="C:cytosol"/>
    <property type="evidence" value="ECO:0007669"/>
    <property type="project" value="TreeGrafter"/>
</dbReference>
<dbReference type="GO" id="GO:0005634">
    <property type="term" value="C:nucleus"/>
    <property type="evidence" value="ECO:0007669"/>
    <property type="project" value="TreeGrafter"/>
</dbReference>
<dbReference type="GO" id="GO:0046872">
    <property type="term" value="F:metal ion binding"/>
    <property type="evidence" value="ECO:0007669"/>
    <property type="project" value="UniProtKB-KW"/>
</dbReference>
<dbReference type="GO" id="GO:0000224">
    <property type="term" value="F:peptide-N4-(N-acetyl-beta-glucosaminyl)asparagine amidase activity"/>
    <property type="evidence" value="ECO:0007669"/>
    <property type="project" value="TreeGrafter"/>
</dbReference>
<dbReference type="GO" id="GO:0006516">
    <property type="term" value="P:glycoprotein catabolic process"/>
    <property type="evidence" value="ECO:0007669"/>
    <property type="project" value="TreeGrafter"/>
</dbReference>
<dbReference type="FunFam" id="3.10.620.30:FF:000004">
    <property type="entry name" value="Peptidase (PNG1)"/>
    <property type="match status" value="1"/>
</dbReference>
<dbReference type="FunFam" id="2.20.25.10:FF:000011">
    <property type="entry name" value="peptide-N(4)-(N-acetyl-beta- glucosaminyl)asparagine amidase"/>
    <property type="match status" value="1"/>
</dbReference>
<dbReference type="Gene3D" id="2.20.25.10">
    <property type="match status" value="1"/>
</dbReference>
<dbReference type="Gene3D" id="3.10.620.30">
    <property type="match status" value="1"/>
</dbReference>
<dbReference type="InterPro" id="IPR038765">
    <property type="entry name" value="Papain-like_cys_pep_sf"/>
</dbReference>
<dbReference type="InterPro" id="IPR050883">
    <property type="entry name" value="PNGase"/>
</dbReference>
<dbReference type="InterPro" id="IPR002931">
    <property type="entry name" value="Transglutaminase-like"/>
</dbReference>
<dbReference type="PANTHER" id="PTHR12143">
    <property type="entry name" value="PEPTIDE N-GLYCANASE PNGASE -RELATED"/>
    <property type="match status" value="1"/>
</dbReference>
<dbReference type="PANTHER" id="PTHR12143:SF19">
    <property type="entry name" value="PEPTIDE-N(4)-(N-ACETYL-BETA-GLUCOSAMINYL)ASPARAGINE AMIDASE"/>
    <property type="match status" value="1"/>
</dbReference>
<dbReference type="Pfam" id="PF01841">
    <property type="entry name" value="Transglut_core"/>
    <property type="match status" value="1"/>
</dbReference>
<dbReference type="SMART" id="SM00460">
    <property type="entry name" value="TGc"/>
    <property type="match status" value="1"/>
</dbReference>
<dbReference type="SUPFAM" id="SSF54001">
    <property type="entry name" value="Cysteine proteinases"/>
    <property type="match status" value="1"/>
</dbReference>
<keyword id="KW-0479">Metal-binding</keyword>
<keyword id="KW-1185">Reference proteome</keyword>
<keyword id="KW-0862">Zinc</keyword>
<sequence>MAGQHPPAGEYGEEWARDLRVQFEGLLRDKRMNDLRNTSRQSSPSLGDQSPHMRSSPFPSDNRPSGSQGPALPSYAALRHLPKIPSPPAAGDRDSQKFRNLLISLSLTPTKYENPGLLDEALQTIPLDRIYGEAEEETQVLQAQAESMGDGRKPEWGYQDCVIRALLRWFKRSFFSWVNNPPCPSCLSPTIAQGMTAPTPEESACGALRVELYRCSAQHCGAYERFPRYGDVWRLLQTRRGRVGEWANCFSMLCRAVGGRVRWVWNAEDHVWTEVYSDHQKRWVHVDACEEAWDNPRLYAEGWGKKMSYCIAFSIDGATDVTRRYVRKNQHASERNRCPEEVLLYVMQEIKNMRRSNMNKDERFRLEKEDTREDKELRGYVVASIAQAVTDLVPGSPGGSNHTTASGSDTKLPAEQPGRQTGTSEWLTAQQQQSHSRYQQPRDPSHRRPLP</sequence>
<comment type="similarity">
    <text evidence="3">Belongs to the transglutaminase-like superfamily. PNGase family.</text>
</comment>
<comment type="caution">
    <text evidence="3">Although strongly related to the peptide:N-glycanase enzyme, it lacks the conserved active site Cys in position 243, which is replaced by a Val residue suggesting that it has no activity.</text>
</comment>
<organism>
    <name type="scientific">Gibberella zeae (strain ATCC MYA-4620 / CBS 123657 / FGSC 9075 / NRRL 31084 / PH-1)</name>
    <name type="common">Wheat head blight fungus</name>
    <name type="synonym">Fusarium graminearum</name>
    <dbReference type="NCBI Taxonomy" id="229533"/>
    <lineage>
        <taxon>Eukaryota</taxon>
        <taxon>Fungi</taxon>
        <taxon>Dikarya</taxon>
        <taxon>Ascomycota</taxon>
        <taxon>Pezizomycotina</taxon>
        <taxon>Sordariomycetes</taxon>
        <taxon>Hypocreomycetidae</taxon>
        <taxon>Hypocreales</taxon>
        <taxon>Nectriaceae</taxon>
        <taxon>Fusarium</taxon>
    </lineage>
</organism>
<feature type="chain" id="PRO_0000248991" description="Protein PNG1">
    <location>
        <begin position="1"/>
        <end position="451"/>
    </location>
</feature>
<feature type="region of interest" description="Disordered" evidence="2">
    <location>
        <begin position="30"/>
        <end position="73"/>
    </location>
</feature>
<feature type="region of interest" description="Disordered" evidence="2">
    <location>
        <begin position="391"/>
        <end position="451"/>
    </location>
</feature>
<feature type="compositionally biased region" description="Polar residues" evidence="2">
    <location>
        <begin position="35"/>
        <end position="48"/>
    </location>
</feature>
<feature type="compositionally biased region" description="Polar residues" evidence="2">
    <location>
        <begin position="57"/>
        <end position="68"/>
    </location>
</feature>
<feature type="compositionally biased region" description="Polar residues" evidence="2">
    <location>
        <begin position="399"/>
        <end position="409"/>
    </location>
</feature>
<feature type="compositionally biased region" description="Polar residues" evidence="2">
    <location>
        <begin position="418"/>
        <end position="429"/>
    </location>
</feature>
<feature type="compositionally biased region" description="Low complexity" evidence="2">
    <location>
        <begin position="430"/>
        <end position="439"/>
    </location>
</feature>
<feature type="binding site" evidence="1">
    <location>
        <position position="183"/>
    </location>
    <ligand>
        <name>Zn(2+)</name>
        <dbReference type="ChEBI" id="CHEBI:29105"/>
    </ligand>
</feature>
<feature type="binding site" evidence="1">
    <location>
        <position position="186"/>
    </location>
    <ligand>
        <name>Zn(2+)</name>
        <dbReference type="ChEBI" id="CHEBI:29105"/>
    </ligand>
</feature>
<feature type="binding site" evidence="1">
    <location>
        <position position="215"/>
    </location>
    <ligand>
        <name>Zn(2+)</name>
        <dbReference type="ChEBI" id="CHEBI:29105"/>
    </ligand>
</feature>
<feature type="binding site" evidence="1">
    <location>
        <position position="220"/>
    </location>
    <ligand>
        <name>Zn(2+)</name>
        <dbReference type="ChEBI" id="CHEBI:29105"/>
    </ligand>
</feature>
<accession>Q4IR87</accession>
<accession>A0A0E0RLP1</accession>
<accession>V6R0L4</accession>
<gene>
    <name type="primary">PNG1</name>
    <name type="ORF">FGRRES_00271</name>
    <name type="ORF">FGSG_00271</name>
</gene>
<proteinExistence type="inferred from homology"/>
<name>PNG1_GIBZE</name>